<name>RBFA_BACC1</name>
<gene>
    <name evidence="1" type="primary">rbfA</name>
    <name type="ordered locus">BCE_3849</name>
</gene>
<organism>
    <name type="scientific">Bacillus cereus (strain ATCC 10987 / NRS 248)</name>
    <dbReference type="NCBI Taxonomy" id="222523"/>
    <lineage>
        <taxon>Bacteria</taxon>
        <taxon>Bacillati</taxon>
        <taxon>Bacillota</taxon>
        <taxon>Bacilli</taxon>
        <taxon>Bacillales</taxon>
        <taxon>Bacillaceae</taxon>
        <taxon>Bacillus</taxon>
        <taxon>Bacillus cereus group</taxon>
    </lineage>
</organism>
<comment type="function">
    <text evidence="1">One of several proteins that assist in the late maturation steps of the functional core of the 30S ribosomal subunit. Associates with free 30S ribosomal subunits (but not with 30S subunits that are part of 70S ribosomes or polysomes). Required for efficient processing of 16S rRNA. May interact with the 5'-terminal helix region of 16S rRNA.</text>
</comment>
<comment type="subunit">
    <text evidence="1">Monomer. Binds 30S ribosomal subunits, but not 50S ribosomal subunits or 70S ribosomes.</text>
</comment>
<comment type="subcellular location">
    <subcellularLocation>
        <location evidence="1">Cytoplasm</location>
    </subcellularLocation>
</comment>
<comment type="similarity">
    <text evidence="1">Belongs to the RbfA family.</text>
</comment>
<evidence type="ECO:0000255" key="1">
    <source>
        <dbReference type="HAMAP-Rule" id="MF_00003"/>
    </source>
</evidence>
<sequence length="118" mass="13414">MKLRANRVGEQMKKELGDIISRKIKDPRVGFVTVTDVQVSGDLQIATVYISVLGDEEQKESTLKGLAKAKGFIRSEIGQRIRLRKTPEISFEFDESIGYGHRIDTLLHEINKEGKREE</sequence>
<reference key="1">
    <citation type="journal article" date="2004" name="Nucleic Acids Res.">
        <title>The genome sequence of Bacillus cereus ATCC 10987 reveals metabolic adaptations and a large plasmid related to Bacillus anthracis pXO1.</title>
        <authorList>
            <person name="Rasko D.A."/>
            <person name="Ravel J."/>
            <person name="Oekstad O.A."/>
            <person name="Helgason E."/>
            <person name="Cer R.Z."/>
            <person name="Jiang L."/>
            <person name="Shores K.A."/>
            <person name="Fouts D.E."/>
            <person name="Tourasse N.J."/>
            <person name="Angiuoli S.V."/>
            <person name="Kolonay J.F."/>
            <person name="Nelson W.C."/>
            <person name="Kolstoe A.-B."/>
            <person name="Fraser C.M."/>
            <person name="Read T.D."/>
        </authorList>
    </citation>
    <scope>NUCLEOTIDE SEQUENCE [LARGE SCALE GENOMIC DNA]</scope>
    <source>
        <strain>ATCC 10987 / NRS 248</strain>
    </source>
</reference>
<dbReference type="EMBL" id="AE017194">
    <property type="protein sequence ID" value="AAS42754.1"/>
    <property type="molecule type" value="Genomic_DNA"/>
</dbReference>
<dbReference type="SMR" id="Q732R1"/>
<dbReference type="KEGG" id="bca:BCE_3849"/>
<dbReference type="HOGENOM" id="CLU_089475_6_3_9"/>
<dbReference type="Proteomes" id="UP000002527">
    <property type="component" value="Chromosome"/>
</dbReference>
<dbReference type="GO" id="GO:0005829">
    <property type="term" value="C:cytosol"/>
    <property type="evidence" value="ECO:0007669"/>
    <property type="project" value="TreeGrafter"/>
</dbReference>
<dbReference type="GO" id="GO:0043024">
    <property type="term" value="F:ribosomal small subunit binding"/>
    <property type="evidence" value="ECO:0007669"/>
    <property type="project" value="TreeGrafter"/>
</dbReference>
<dbReference type="GO" id="GO:0030490">
    <property type="term" value="P:maturation of SSU-rRNA"/>
    <property type="evidence" value="ECO:0007669"/>
    <property type="project" value="UniProtKB-UniRule"/>
</dbReference>
<dbReference type="FunFam" id="3.30.300.20:FF:000009">
    <property type="entry name" value="Ribosome-binding factor A"/>
    <property type="match status" value="1"/>
</dbReference>
<dbReference type="Gene3D" id="3.30.300.20">
    <property type="match status" value="1"/>
</dbReference>
<dbReference type="HAMAP" id="MF_00003">
    <property type="entry name" value="RbfA"/>
    <property type="match status" value="1"/>
</dbReference>
<dbReference type="InterPro" id="IPR015946">
    <property type="entry name" value="KH_dom-like_a/b"/>
</dbReference>
<dbReference type="InterPro" id="IPR000238">
    <property type="entry name" value="RbfA"/>
</dbReference>
<dbReference type="InterPro" id="IPR023799">
    <property type="entry name" value="RbfA_dom_sf"/>
</dbReference>
<dbReference type="InterPro" id="IPR020053">
    <property type="entry name" value="Ribosome-bd_factorA_CS"/>
</dbReference>
<dbReference type="NCBIfam" id="TIGR00082">
    <property type="entry name" value="rbfA"/>
    <property type="match status" value="1"/>
</dbReference>
<dbReference type="PANTHER" id="PTHR33515">
    <property type="entry name" value="RIBOSOME-BINDING FACTOR A, CHLOROPLASTIC-RELATED"/>
    <property type="match status" value="1"/>
</dbReference>
<dbReference type="PANTHER" id="PTHR33515:SF1">
    <property type="entry name" value="RIBOSOME-BINDING FACTOR A, CHLOROPLASTIC-RELATED"/>
    <property type="match status" value="1"/>
</dbReference>
<dbReference type="Pfam" id="PF02033">
    <property type="entry name" value="RBFA"/>
    <property type="match status" value="1"/>
</dbReference>
<dbReference type="SUPFAM" id="SSF89919">
    <property type="entry name" value="Ribosome-binding factor A, RbfA"/>
    <property type="match status" value="1"/>
</dbReference>
<dbReference type="PROSITE" id="PS01319">
    <property type="entry name" value="RBFA"/>
    <property type="match status" value="1"/>
</dbReference>
<protein>
    <recommendedName>
        <fullName evidence="1">Ribosome-binding factor A</fullName>
    </recommendedName>
</protein>
<keyword id="KW-0963">Cytoplasm</keyword>
<keyword id="KW-0690">Ribosome biogenesis</keyword>
<feature type="chain" id="PRO_0000102614" description="Ribosome-binding factor A">
    <location>
        <begin position="1"/>
        <end position="118"/>
    </location>
</feature>
<accession>Q732R1</accession>
<proteinExistence type="inferred from homology"/>